<organism>
    <name type="scientific">Homo sapiens</name>
    <name type="common">Human</name>
    <dbReference type="NCBI Taxonomy" id="9606"/>
    <lineage>
        <taxon>Eukaryota</taxon>
        <taxon>Metazoa</taxon>
        <taxon>Chordata</taxon>
        <taxon>Craniata</taxon>
        <taxon>Vertebrata</taxon>
        <taxon>Euteleostomi</taxon>
        <taxon>Mammalia</taxon>
        <taxon>Eutheria</taxon>
        <taxon>Euarchontoglires</taxon>
        <taxon>Primates</taxon>
        <taxon>Haplorrhini</taxon>
        <taxon>Catarrhini</taxon>
        <taxon>Hominidae</taxon>
        <taxon>Homo</taxon>
    </lineage>
</organism>
<evidence type="ECO:0000250" key="1"/>
<evidence type="ECO:0000250" key="2">
    <source>
        <dbReference type="UniProtKB" id="P14231"/>
    </source>
</evidence>
<evidence type="ECO:0000255" key="3"/>
<evidence type="ECO:0000269" key="4">
    <source>
    </source>
</evidence>
<evidence type="ECO:0000305" key="5"/>
<sequence>MVIQKEKKSCGQVVEEWKEFVWNPRTHQFMGRTGTSWAFILLFYLVFYGFLTAMFTLTMWVMLQTVSDHTPKYQDRLATPGLMIRPKTENLDVIVNVSDTESWDQHVQKLNKFLEPYNDSIQAQKNDVCRPGRYYEQPDNGVLNYPKRACQFNRTQLGNCSGIGDSTHYGYSTGQPCVFIKMNRVINFYAGANQSMNVTCAGKRDEDAENLGNFVMFPANGNIDLMYFPYYGKKFHVNYTQPLVAVKFLNVTPNVEVNVECRINAANIATDDERDKFAGRVAFKLRINKT</sequence>
<comment type="function">
    <text>This is the non-catalytic component of the active enzyme, which catalyzes the hydrolysis of ATP coupled with the exchange of Na(+) and K(+) ions across the plasma membrane. The exact function of the beta-2 subunit is not known.</text>
</comment>
<comment type="function">
    <text evidence="1">Mediates cell adhesion of neurons and astrocytes, and promotes neurite outgrowth.</text>
</comment>
<comment type="subunit">
    <text evidence="2 5">The sodium/potassium-transporting ATPase is composed of a catalytic alpha subunit, an auxiliary non-catalytic beta subunit and an additional regulatory subunit. Interacts with isoform 2 of BSG (By similarity).</text>
</comment>
<comment type="subcellular location">
    <subcellularLocation>
        <location>Cell membrane</location>
        <topology>Single-pass type II membrane protein</topology>
    </subcellularLocation>
</comment>
<comment type="domain">
    <text evidence="1">The C-terminal lobe folds into an immunoglobulin-like domain and mediates cell adhesion properties.</text>
</comment>
<comment type="similarity">
    <text evidence="5">Belongs to the X(+)/potassium ATPases subunit beta family.</text>
</comment>
<reference key="1">
    <citation type="journal article" date="1994" name="Biochim. Biophys. Acta">
        <title>Nucleotide sequence of a cDNA for the beta 2 subunit isoform of Na+,K(+)-ATPase from human retina.</title>
        <authorList>
            <person name="Hernando N."/>
            <person name="Martin-Vasallo P."/>
            <person name="Ghosh S."/>
            <person name="Ghosh P.K."/>
            <person name="Swaroop A."/>
            <person name="Coca-Prados M."/>
        </authorList>
    </citation>
    <scope>NUCLEOTIDE SEQUENCE [MRNA]</scope>
    <source>
        <tissue>Retina</tissue>
    </source>
</reference>
<reference key="2">
    <citation type="journal article" date="1996" name="Gene">
        <title>Expression and synthesis of the Na,K-ATPase beta 2 subunit in human retinal pigment epithelium.</title>
        <authorList>
            <person name="Ruiz A.C."/>
            <person name="Bhat S.P."/>
            <person name="Bok D."/>
        </authorList>
    </citation>
    <scope>NUCLEOTIDE SEQUENCE [MRNA]</scope>
    <source>
        <tissue>Retinal pigment epithelium</tissue>
    </source>
</reference>
<reference key="3">
    <citation type="journal article" date="1998" name="Gene">
        <title>Structure and expression of the human Na,K-ATPase beta 2-subunit gene.</title>
        <authorList>
            <person name="Avila J."/>
            <person name="Alvarez de la Rosa D."/>
            <person name="Gonzalez-Martinez L.M."/>
            <person name="Lecuona E."/>
            <person name="Martin-Vasallo P."/>
        </authorList>
    </citation>
    <scope>NUCLEOTIDE SEQUENCE [GENOMIC DNA]</scope>
</reference>
<reference key="4">
    <citation type="journal article" date="2004" name="Nat. Genet.">
        <title>Complete sequencing and characterization of 21,243 full-length human cDNAs.</title>
        <authorList>
            <person name="Ota T."/>
            <person name="Suzuki Y."/>
            <person name="Nishikawa T."/>
            <person name="Otsuki T."/>
            <person name="Sugiyama T."/>
            <person name="Irie R."/>
            <person name="Wakamatsu A."/>
            <person name="Hayashi K."/>
            <person name="Sato H."/>
            <person name="Nagai K."/>
            <person name="Kimura K."/>
            <person name="Makita H."/>
            <person name="Sekine M."/>
            <person name="Obayashi M."/>
            <person name="Nishi T."/>
            <person name="Shibahara T."/>
            <person name="Tanaka T."/>
            <person name="Ishii S."/>
            <person name="Yamamoto J."/>
            <person name="Saito K."/>
            <person name="Kawai Y."/>
            <person name="Isono Y."/>
            <person name="Nakamura Y."/>
            <person name="Nagahari K."/>
            <person name="Murakami K."/>
            <person name="Yasuda T."/>
            <person name="Iwayanagi T."/>
            <person name="Wagatsuma M."/>
            <person name="Shiratori A."/>
            <person name="Sudo H."/>
            <person name="Hosoiri T."/>
            <person name="Kaku Y."/>
            <person name="Kodaira H."/>
            <person name="Kondo H."/>
            <person name="Sugawara M."/>
            <person name="Takahashi M."/>
            <person name="Kanda K."/>
            <person name="Yokoi T."/>
            <person name="Furuya T."/>
            <person name="Kikkawa E."/>
            <person name="Omura Y."/>
            <person name="Abe K."/>
            <person name="Kamihara K."/>
            <person name="Katsuta N."/>
            <person name="Sato K."/>
            <person name="Tanikawa M."/>
            <person name="Yamazaki M."/>
            <person name="Ninomiya K."/>
            <person name="Ishibashi T."/>
            <person name="Yamashita H."/>
            <person name="Murakawa K."/>
            <person name="Fujimori K."/>
            <person name="Tanai H."/>
            <person name="Kimata M."/>
            <person name="Watanabe M."/>
            <person name="Hiraoka S."/>
            <person name="Chiba Y."/>
            <person name="Ishida S."/>
            <person name="Ono Y."/>
            <person name="Takiguchi S."/>
            <person name="Watanabe S."/>
            <person name="Yosida M."/>
            <person name="Hotuta T."/>
            <person name="Kusano J."/>
            <person name="Kanehori K."/>
            <person name="Takahashi-Fujii A."/>
            <person name="Hara H."/>
            <person name="Tanase T.-O."/>
            <person name="Nomura Y."/>
            <person name="Togiya S."/>
            <person name="Komai F."/>
            <person name="Hara R."/>
            <person name="Takeuchi K."/>
            <person name="Arita M."/>
            <person name="Imose N."/>
            <person name="Musashino K."/>
            <person name="Yuuki H."/>
            <person name="Oshima A."/>
            <person name="Sasaki N."/>
            <person name="Aotsuka S."/>
            <person name="Yoshikawa Y."/>
            <person name="Matsunawa H."/>
            <person name="Ichihara T."/>
            <person name="Shiohata N."/>
            <person name="Sano S."/>
            <person name="Moriya S."/>
            <person name="Momiyama H."/>
            <person name="Satoh N."/>
            <person name="Takami S."/>
            <person name="Terashima Y."/>
            <person name="Suzuki O."/>
            <person name="Nakagawa S."/>
            <person name="Senoh A."/>
            <person name="Mizoguchi H."/>
            <person name="Goto Y."/>
            <person name="Shimizu F."/>
            <person name="Wakebe H."/>
            <person name="Hishigaki H."/>
            <person name="Watanabe T."/>
            <person name="Sugiyama A."/>
            <person name="Takemoto M."/>
            <person name="Kawakami B."/>
            <person name="Yamazaki M."/>
            <person name="Watanabe K."/>
            <person name="Kumagai A."/>
            <person name="Itakura S."/>
            <person name="Fukuzumi Y."/>
            <person name="Fujimori Y."/>
            <person name="Komiyama M."/>
            <person name="Tashiro H."/>
            <person name="Tanigami A."/>
            <person name="Fujiwara T."/>
            <person name="Ono T."/>
            <person name="Yamada K."/>
            <person name="Fujii Y."/>
            <person name="Ozaki K."/>
            <person name="Hirao M."/>
            <person name="Ohmori Y."/>
            <person name="Kawabata A."/>
            <person name="Hikiji T."/>
            <person name="Kobatake N."/>
            <person name="Inagaki H."/>
            <person name="Ikema Y."/>
            <person name="Okamoto S."/>
            <person name="Okitani R."/>
            <person name="Kawakami T."/>
            <person name="Noguchi S."/>
            <person name="Itoh T."/>
            <person name="Shigeta K."/>
            <person name="Senba T."/>
            <person name="Matsumura K."/>
            <person name="Nakajima Y."/>
            <person name="Mizuno T."/>
            <person name="Morinaga M."/>
            <person name="Sasaki M."/>
            <person name="Togashi T."/>
            <person name="Oyama M."/>
            <person name="Hata H."/>
            <person name="Watanabe M."/>
            <person name="Komatsu T."/>
            <person name="Mizushima-Sugano J."/>
            <person name="Satoh T."/>
            <person name="Shirai Y."/>
            <person name="Takahashi Y."/>
            <person name="Nakagawa K."/>
            <person name="Okumura K."/>
            <person name="Nagase T."/>
            <person name="Nomura N."/>
            <person name="Kikuchi H."/>
            <person name="Masuho Y."/>
            <person name="Yamashita R."/>
            <person name="Nakai K."/>
            <person name="Yada T."/>
            <person name="Nakamura Y."/>
            <person name="Ohara O."/>
            <person name="Isogai T."/>
            <person name="Sugano S."/>
        </authorList>
    </citation>
    <scope>NUCLEOTIDE SEQUENCE [LARGE SCALE MRNA]</scope>
    <source>
        <tissue>Thalamus</tissue>
    </source>
</reference>
<reference key="5">
    <citation type="submission" date="2005-09" db="EMBL/GenBank/DDBJ databases">
        <authorList>
            <person name="Mural R.J."/>
            <person name="Istrail S."/>
            <person name="Sutton G.G."/>
            <person name="Florea L."/>
            <person name="Halpern A.L."/>
            <person name="Mobarry C.M."/>
            <person name="Lippert R."/>
            <person name="Walenz B."/>
            <person name="Shatkay H."/>
            <person name="Dew I."/>
            <person name="Miller J.R."/>
            <person name="Flanigan M.J."/>
            <person name="Edwards N.J."/>
            <person name="Bolanos R."/>
            <person name="Fasulo D."/>
            <person name="Halldorsson B.V."/>
            <person name="Hannenhalli S."/>
            <person name="Turner R."/>
            <person name="Yooseph S."/>
            <person name="Lu F."/>
            <person name="Nusskern D.R."/>
            <person name="Shue B.C."/>
            <person name="Zheng X.H."/>
            <person name="Zhong F."/>
            <person name="Delcher A.L."/>
            <person name="Huson D.H."/>
            <person name="Kravitz S.A."/>
            <person name="Mouchard L."/>
            <person name="Reinert K."/>
            <person name="Remington K.A."/>
            <person name="Clark A.G."/>
            <person name="Waterman M.S."/>
            <person name="Eichler E.E."/>
            <person name="Adams M.D."/>
            <person name="Hunkapiller M.W."/>
            <person name="Myers E.W."/>
            <person name="Venter J.C."/>
        </authorList>
    </citation>
    <scope>NUCLEOTIDE SEQUENCE [LARGE SCALE GENOMIC DNA]</scope>
</reference>
<reference key="6">
    <citation type="journal article" date="2004" name="Genome Res.">
        <title>The status, quality, and expansion of the NIH full-length cDNA project: the Mammalian Gene Collection (MGC).</title>
        <authorList>
            <consortium name="The MGC Project Team"/>
        </authorList>
    </citation>
    <scope>NUCLEOTIDE SEQUENCE [LARGE SCALE MRNA]</scope>
</reference>
<reference key="7">
    <citation type="journal article" date="1989" name="J. Biol. Chem.">
        <title>Identification of a putative isoform of the Na,K-ATPase beta subunit. Primary structure and tissue-specific expression.</title>
        <authorList>
            <person name="Martin-Vasallo P."/>
            <person name="Dackowski W."/>
            <person name="Emanuel J.R."/>
            <person name="Levenson R."/>
        </authorList>
    </citation>
    <scope>NUCLEOTIDE SEQUENCE [MRNA] OF 2-290</scope>
</reference>
<reference key="8">
    <citation type="journal article" date="2009" name="Biochemistry">
        <title>A C-terminal lobe of the beta subunit of Na,K-ATPase and H,K-ATPase resembles cell adhesion molecules.</title>
        <authorList>
            <person name="Bab-Dinitz E."/>
            <person name="Albeck S."/>
            <person name="Peleg Y."/>
            <person name="Brumfeld V."/>
            <person name="Gottschalk K.E."/>
            <person name="Karlish S.J."/>
        </authorList>
    </citation>
    <scope>DOMAIN IMMUNOGLOBULIN-LIKE</scope>
</reference>
<reference key="9">
    <citation type="journal article" date="2009" name="J. Proteome Res.">
        <title>Glycoproteomics analysis of human liver tissue by combination of multiple enzyme digestion and hydrazide chemistry.</title>
        <authorList>
            <person name="Chen R."/>
            <person name="Jiang X."/>
            <person name="Sun D."/>
            <person name="Han G."/>
            <person name="Wang F."/>
            <person name="Ye M."/>
            <person name="Wang L."/>
            <person name="Zou H."/>
        </authorList>
    </citation>
    <scope>GLYCOSYLATION [LARGE SCALE ANALYSIS] AT ASN-238</scope>
    <source>
        <tissue>Liver</tissue>
    </source>
</reference>
<feature type="chain" id="PRO_0000219104" description="Sodium/potassium-transporting ATPase subunit beta-2">
    <location>
        <begin position="1"/>
        <end position="290"/>
    </location>
</feature>
<feature type="topological domain" description="Cytoplasmic" evidence="3">
    <location>
        <begin position="1"/>
        <end position="39"/>
    </location>
</feature>
<feature type="transmembrane region" description="Helical; Signal-anchor for type II membrane protein" evidence="3">
    <location>
        <begin position="40"/>
        <end position="67"/>
    </location>
</feature>
<feature type="topological domain" description="Extracellular" evidence="3">
    <location>
        <begin position="68"/>
        <end position="290"/>
    </location>
</feature>
<feature type="region of interest" description="immunoglobulin-like">
    <location>
        <begin position="193"/>
        <end position="290"/>
    </location>
</feature>
<feature type="glycosylation site" description="N-linked (GlcNAc...) asparagine" evidence="3">
    <location>
        <position position="96"/>
    </location>
</feature>
<feature type="glycosylation site" description="N-linked (GlcNAc...) asparagine" evidence="3">
    <location>
        <position position="118"/>
    </location>
</feature>
<feature type="glycosylation site" description="N-linked (GlcNAc...) asparagine" evidence="3">
    <location>
        <position position="153"/>
    </location>
</feature>
<feature type="glycosylation site" description="N-linked (GlcNAc...) asparagine" evidence="3">
    <location>
        <position position="159"/>
    </location>
</feature>
<feature type="glycosylation site" description="N-linked (GlcNAc...) asparagine" evidence="3">
    <location>
        <position position="193"/>
    </location>
</feature>
<feature type="glycosylation site" description="N-linked (GlcNAc...) asparagine" evidence="3">
    <location>
        <position position="197"/>
    </location>
</feature>
<feature type="glycosylation site" description="N-linked (GlcNAc...) asparagine" evidence="4">
    <location>
        <position position="238"/>
    </location>
</feature>
<feature type="disulfide bond" evidence="1">
    <location>
        <begin position="129"/>
        <end position="150"/>
    </location>
</feature>
<feature type="disulfide bond" evidence="1">
    <location>
        <begin position="160"/>
        <end position="177"/>
    </location>
</feature>
<feature type="disulfide bond" evidence="1">
    <location>
        <begin position="200"/>
        <end position="261"/>
    </location>
</feature>
<feature type="sequence variant" id="VAR_061031" description="In dbSNP:rs34745087.">
    <original>Q</original>
    <variation>L</variation>
    <location>
        <position position="124"/>
    </location>
</feature>
<feature type="sequence variant" id="VAR_030339" description="In dbSNP:rs2227866.">
    <original>T</original>
    <variation>A</variation>
    <location>
        <position position="199"/>
    </location>
</feature>
<feature type="sequence conflict" description="In Ref. 1; AAA51805 and 6; no nucleotide entry." evidence="5" ref="1 6">
    <original>L</original>
    <variation>P</variation>
    <location>
        <position position="51"/>
    </location>
</feature>
<feature type="sequence conflict" description="In Ref. 1; AAA51805 and 6; no nucleotide entry." evidence="5" ref="1 6">
    <original>I</original>
    <variation>M</variation>
    <location>
        <position position="121"/>
    </location>
</feature>
<feature type="sequence conflict" description="In Ref. 1; AAA51805 and 6; no nucleotide entry." evidence="5" ref="1 6">
    <original>R</original>
    <variation>L</variation>
    <location>
        <position position="148"/>
    </location>
</feature>
<feature type="sequence conflict" description="In Ref. 2; AAC50873." evidence="5" ref="2">
    <original>F</original>
    <variation>L</variation>
    <location>
        <position position="248"/>
    </location>
</feature>
<proteinExistence type="evidence at protein level"/>
<name>AT1B2_HUMAN</name>
<gene>
    <name type="primary">ATP1B2</name>
</gene>
<accession>P14415</accession>
<accession>A0AV17</accession>
<accession>A8K278</accession>
<accession>D3DTQ2</accession>
<accession>O60444</accession>
<dbReference type="EMBL" id="M81181">
    <property type="protein sequence ID" value="AAA51805.1"/>
    <property type="molecule type" value="mRNA"/>
</dbReference>
<dbReference type="EMBL" id="U45945">
    <property type="protein sequence ID" value="AAC50873.1"/>
    <property type="molecule type" value="mRNA"/>
</dbReference>
<dbReference type="EMBL" id="AF007876">
    <property type="protein sequence ID" value="AAC39686.1"/>
    <property type="molecule type" value="Genomic_DNA"/>
</dbReference>
<dbReference type="EMBL" id="AK290143">
    <property type="protein sequence ID" value="BAF82832.1"/>
    <property type="molecule type" value="mRNA"/>
</dbReference>
<dbReference type="EMBL" id="CH471108">
    <property type="protein sequence ID" value="EAW90148.1"/>
    <property type="molecule type" value="Genomic_DNA"/>
</dbReference>
<dbReference type="EMBL" id="BC126175">
    <property type="protein sequence ID" value="AAI26176.1"/>
    <property type="molecule type" value="mRNA"/>
</dbReference>
<dbReference type="CCDS" id="CCDS32550.1"/>
<dbReference type="PIR" id="B32459">
    <property type="entry name" value="B32459"/>
</dbReference>
<dbReference type="PIR" id="JC5107">
    <property type="entry name" value="JC5107"/>
</dbReference>
<dbReference type="RefSeq" id="NP_001290192.1">
    <property type="nucleotide sequence ID" value="NM_001303263.1"/>
</dbReference>
<dbReference type="RefSeq" id="NP_001669.3">
    <property type="nucleotide sequence ID" value="NM_001678.4"/>
</dbReference>
<dbReference type="SMR" id="P14415"/>
<dbReference type="BioGRID" id="106972">
    <property type="interactions" value="19"/>
</dbReference>
<dbReference type="CORUM" id="P14415"/>
<dbReference type="FunCoup" id="P14415">
    <property type="interactions" value="1060"/>
</dbReference>
<dbReference type="IntAct" id="P14415">
    <property type="interactions" value="9"/>
</dbReference>
<dbReference type="STRING" id="9606.ENSP00000250111"/>
<dbReference type="BindingDB" id="P14415"/>
<dbReference type="ChEMBL" id="CHEMBL2095186"/>
<dbReference type="DrugBank" id="DB09020">
    <property type="generic name" value="Bisacodyl"/>
</dbReference>
<dbReference type="DrugBank" id="DB01396">
    <property type="generic name" value="Digitoxin"/>
</dbReference>
<dbReference type="DrugBank" id="DB00390">
    <property type="generic name" value="Digoxin"/>
</dbReference>
<dbReference type="DrugBank" id="DB06157">
    <property type="generic name" value="Istaroxime"/>
</dbReference>
<dbReference type="DrugBank" id="DB12843">
    <property type="generic name" value="Oleandrin"/>
</dbReference>
<dbReference type="DrugBank" id="DB01250">
    <property type="generic name" value="Olsalazine"/>
</dbReference>
<dbReference type="DrugBank" id="DB12350">
    <property type="generic name" value="Rostafuroxin"/>
</dbReference>
<dbReference type="DrugBank" id="DB09479">
    <property type="generic name" value="Rubidium Rb-82"/>
</dbReference>
<dbReference type="DrugBank" id="DB16690">
    <property type="generic name" value="Tegoprazan"/>
</dbReference>
<dbReference type="DrugCentral" id="P14415"/>
<dbReference type="GlyConnect" id="1758">
    <property type="glycosylation" value="1 N-Linked glycan (1 site)"/>
</dbReference>
<dbReference type="GlyCosmos" id="P14415">
    <property type="glycosylation" value="7 sites, 1 glycan"/>
</dbReference>
<dbReference type="GlyGen" id="P14415">
    <property type="glycosylation" value="8 sites, 8 N-linked glycans (7 sites)"/>
</dbReference>
<dbReference type="iPTMnet" id="P14415"/>
<dbReference type="PhosphoSitePlus" id="P14415"/>
<dbReference type="SwissPalm" id="P14415"/>
<dbReference type="BioMuta" id="ATP1B2"/>
<dbReference type="DMDM" id="125987795"/>
<dbReference type="jPOST" id="P14415"/>
<dbReference type="MassIVE" id="P14415"/>
<dbReference type="PaxDb" id="9606-ENSP00000250111"/>
<dbReference type="PeptideAtlas" id="P14415"/>
<dbReference type="ProteomicsDB" id="53052"/>
<dbReference type="Antibodypedia" id="2415">
    <property type="antibodies" value="240 antibodies from 32 providers"/>
</dbReference>
<dbReference type="DNASU" id="482"/>
<dbReference type="Ensembl" id="ENST00000250111.9">
    <property type="protein sequence ID" value="ENSP00000250111.4"/>
    <property type="gene ID" value="ENSG00000129244.9"/>
</dbReference>
<dbReference type="GeneID" id="482"/>
<dbReference type="KEGG" id="hsa:482"/>
<dbReference type="MANE-Select" id="ENST00000250111.9">
    <property type="protein sequence ID" value="ENSP00000250111.4"/>
    <property type="RefSeq nucleotide sequence ID" value="NM_001678.5"/>
    <property type="RefSeq protein sequence ID" value="NP_001669.3"/>
</dbReference>
<dbReference type="UCSC" id="uc002gif.2">
    <property type="organism name" value="human"/>
</dbReference>
<dbReference type="AGR" id="HGNC:805"/>
<dbReference type="CTD" id="482"/>
<dbReference type="DisGeNET" id="482"/>
<dbReference type="GeneCards" id="ATP1B2"/>
<dbReference type="HGNC" id="HGNC:805">
    <property type="gene designation" value="ATP1B2"/>
</dbReference>
<dbReference type="HPA" id="ENSG00000129244">
    <property type="expression patterns" value="Group enriched (brain, retina)"/>
</dbReference>
<dbReference type="MIM" id="182331">
    <property type="type" value="gene"/>
</dbReference>
<dbReference type="neXtProt" id="NX_P14415"/>
<dbReference type="OpenTargets" id="ENSG00000129244"/>
<dbReference type="PharmGKB" id="PA67"/>
<dbReference type="VEuPathDB" id="HostDB:ENSG00000129244"/>
<dbReference type="eggNOG" id="KOG3927">
    <property type="taxonomic scope" value="Eukaryota"/>
</dbReference>
<dbReference type="GeneTree" id="ENSGT01030000234579"/>
<dbReference type="HOGENOM" id="CLU_057702_1_1_1"/>
<dbReference type="InParanoid" id="P14415"/>
<dbReference type="OMA" id="IGDPTYY"/>
<dbReference type="OrthoDB" id="5912413at2759"/>
<dbReference type="PAN-GO" id="P14415">
    <property type="GO annotations" value="6 GO annotations based on evolutionary models"/>
</dbReference>
<dbReference type="PhylomeDB" id="P14415"/>
<dbReference type="TreeFam" id="TF314618"/>
<dbReference type="PathwayCommons" id="P14415"/>
<dbReference type="Reactome" id="R-HSA-210991">
    <property type="pathway name" value="Basigin interactions"/>
</dbReference>
<dbReference type="Reactome" id="R-HSA-5578775">
    <property type="pathway name" value="Ion homeostasis"/>
</dbReference>
<dbReference type="Reactome" id="R-HSA-936837">
    <property type="pathway name" value="Ion transport by P-type ATPases"/>
</dbReference>
<dbReference type="Reactome" id="R-HSA-9679191">
    <property type="pathway name" value="Potential therapeutics for SARS"/>
</dbReference>
<dbReference type="SignaLink" id="P14415"/>
<dbReference type="BioGRID-ORCS" id="482">
    <property type="hits" value="6 hits in 1150 CRISPR screens"/>
</dbReference>
<dbReference type="CD-CODE" id="FB4E32DD">
    <property type="entry name" value="Presynaptic clusters and postsynaptic densities"/>
</dbReference>
<dbReference type="ChiTaRS" id="ATP1B2">
    <property type="organism name" value="human"/>
</dbReference>
<dbReference type="GenomeRNAi" id="482"/>
<dbReference type="Pharos" id="P14415">
    <property type="development level" value="Tclin"/>
</dbReference>
<dbReference type="PRO" id="PR:P14415"/>
<dbReference type="Proteomes" id="UP000005640">
    <property type="component" value="Chromosome 17"/>
</dbReference>
<dbReference type="RNAct" id="P14415">
    <property type="molecule type" value="protein"/>
</dbReference>
<dbReference type="Bgee" id="ENSG00000129244">
    <property type="expression patterns" value="Expressed in right hemisphere of cerebellum and 148 other cell types or tissues"/>
</dbReference>
<dbReference type="ExpressionAtlas" id="P14415">
    <property type="expression patterns" value="baseline and differential"/>
</dbReference>
<dbReference type="GO" id="GO:0016324">
    <property type="term" value="C:apical plasma membrane"/>
    <property type="evidence" value="ECO:0000314"/>
    <property type="project" value="ARUK-UCL"/>
</dbReference>
<dbReference type="GO" id="GO:0097450">
    <property type="term" value="C:astrocyte end-foot"/>
    <property type="evidence" value="ECO:0000250"/>
    <property type="project" value="ARUK-UCL"/>
</dbReference>
<dbReference type="GO" id="GO:0097449">
    <property type="term" value="C:astrocyte projection"/>
    <property type="evidence" value="ECO:0000314"/>
    <property type="project" value="ARUK-UCL"/>
</dbReference>
<dbReference type="GO" id="GO:0044298">
    <property type="term" value="C:cell body membrane"/>
    <property type="evidence" value="ECO:0000250"/>
    <property type="project" value="ARUK-UCL"/>
</dbReference>
<dbReference type="GO" id="GO:0071944">
    <property type="term" value="C:cell periphery"/>
    <property type="evidence" value="ECO:0000250"/>
    <property type="project" value="ARUK-UCL"/>
</dbReference>
<dbReference type="GO" id="GO:0031253">
    <property type="term" value="C:cell projection membrane"/>
    <property type="evidence" value="ECO:0000250"/>
    <property type="project" value="ARUK-UCL"/>
</dbReference>
<dbReference type="GO" id="GO:0005737">
    <property type="term" value="C:cytoplasm"/>
    <property type="evidence" value="ECO:0007669"/>
    <property type="project" value="Ensembl"/>
</dbReference>
<dbReference type="GO" id="GO:0009897">
    <property type="term" value="C:external side of plasma membrane"/>
    <property type="evidence" value="ECO:0000250"/>
    <property type="project" value="ARUK-UCL"/>
</dbReference>
<dbReference type="GO" id="GO:0016328">
    <property type="term" value="C:lateral plasma membrane"/>
    <property type="evidence" value="ECO:0000314"/>
    <property type="project" value="ARUK-UCL"/>
</dbReference>
<dbReference type="GO" id="GO:0016020">
    <property type="term" value="C:membrane"/>
    <property type="evidence" value="ECO:0000250"/>
    <property type="project" value="ARUK-UCL"/>
</dbReference>
<dbReference type="GO" id="GO:0098984">
    <property type="term" value="C:neuron to neuron synapse"/>
    <property type="evidence" value="ECO:0000250"/>
    <property type="project" value="ARUK-UCL"/>
</dbReference>
<dbReference type="GO" id="GO:0001917">
    <property type="term" value="C:photoreceptor inner segment"/>
    <property type="evidence" value="ECO:0000250"/>
    <property type="project" value="ARUK-UCL"/>
</dbReference>
<dbReference type="GO" id="GO:0005886">
    <property type="term" value="C:plasma membrane"/>
    <property type="evidence" value="ECO:0000250"/>
    <property type="project" value="ARUK-UCL"/>
</dbReference>
<dbReference type="GO" id="GO:0005890">
    <property type="term" value="C:sodium:potassium-exchanging ATPase complex"/>
    <property type="evidence" value="ECO:0000314"/>
    <property type="project" value="BHF-UCL"/>
</dbReference>
<dbReference type="GO" id="GO:0001671">
    <property type="term" value="F:ATPase activator activity"/>
    <property type="evidence" value="ECO:0000314"/>
    <property type="project" value="BHF-UCL"/>
</dbReference>
<dbReference type="GO" id="GO:0051117">
    <property type="term" value="F:ATPase binding"/>
    <property type="evidence" value="ECO:0000353"/>
    <property type="project" value="BHF-UCL"/>
</dbReference>
<dbReference type="GO" id="GO:0046982">
    <property type="term" value="F:protein heterodimerization activity"/>
    <property type="evidence" value="ECO:0000250"/>
    <property type="project" value="ARUK-UCL"/>
</dbReference>
<dbReference type="GO" id="GO:0030674">
    <property type="term" value="F:protein-macromolecule adaptor activity"/>
    <property type="evidence" value="ECO:0000314"/>
    <property type="project" value="BHF-UCL"/>
</dbReference>
<dbReference type="GO" id="GO:0141109">
    <property type="term" value="F:transporter activator activity"/>
    <property type="evidence" value="ECO:0000314"/>
    <property type="project" value="BHF-UCL"/>
</dbReference>
<dbReference type="GO" id="GO:0086064">
    <property type="term" value="P:cell communication by electrical coupling involved in cardiac conduction"/>
    <property type="evidence" value="ECO:0000304"/>
    <property type="project" value="BHF-UCL"/>
</dbReference>
<dbReference type="GO" id="GO:0031589">
    <property type="term" value="P:cell-substrate adhesion"/>
    <property type="evidence" value="ECO:0000250"/>
    <property type="project" value="ARUK-UCL"/>
</dbReference>
<dbReference type="GO" id="GO:0030007">
    <property type="term" value="P:intracellular potassium ion homeostasis"/>
    <property type="evidence" value="ECO:0000314"/>
    <property type="project" value="BHF-UCL"/>
</dbReference>
<dbReference type="GO" id="GO:0006883">
    <property type="term" value="P:intracellular sodium ion homeostasis"/>
    <property type="evidence" value="ECO:0000314"/>
    <property type="project" value="BHF-UCL"/>
</dbReference>
<dbReference type="GO" id="GO:0021670">
    <property type="term" value="P:lateral ventricle development"/>
    <property type="evidence" value="ECO:0000250"/>
    <property type="project" value="ARUK-UCL"/>
</dbReference>
<dbReference type="GO" id="GO:0086009">
    <property type="term" value="P:membrane repolarization"/>
    <property type="evidence" value="ECO:0000314"/>
    <property type="project" value="BHF-UCL"/>
</dbReference>
<dbReference type="GO" id="GO:0061744">
    <property type="term" value="P:motor behavior"/>
    <property type="evidence" value="ECO:0000250"/>
    <property type="project" value="ARUK-UCL"/>
</dbReference>
<dbReference type="GO" id="GO:1903976">
    <property type="term" value="P:negative regulation of glial cell migration"/>
    <property type="evidence" value="ECO:0000250"/>
    <property type="project" value="ARUK-UCL"/>
</dbReference>
<dbReference type="GO" id="GO:0021944">
    <property type="term" value="P:neuronal-glial interaction involved in hindbrain glial-mediated radial cell migration"/>
    <property type="evidence" value="ECO:0000250"/>
    <property type="project" value="ARUK-UCL"/>
</dbReference>
<dbReference type="GO" id="GO:0045494">
    <property type="term" value="P:photoreceptor cell maintenance"/>
    <property type="evidence" value="ECO:0000250"/>
    <property type="project" value="ARUK-UCL"/>
</dbReference>
<dbReference type="GO" id="GO:0120036">
    <property type="term" value="P:plasma membrane bounded cell projection organization"/>
    <property type="evidence" value="ECO:0000250"/>
    <property type="project" value="ARUK-UCL"/>
</dbReference>
<dbReference type="GO" id="GO:0010976">
    <property type="term" value="P:positive regulation of neuron projection development"/>
    <property type="evidence" value="ECO:0000250"/>
    <property type="project" value="ARUK-UCL"/>
</dbReference>
<dbReference type="GO" id="GO:1903288">
    <property type="term" value="P:positive regulation of potassium ion import across plasma membrane"/>
    <property type="evidence" value="ECO:0000314"/>
    <property type="project" value="BHF-UCL"/>
</dbReference>
<dbReference type="GO" id="GO:1903278">
    <property type="term" value="P:positive regulation of sodium ion export across plasma membrane"/>
    <property type="evidence" value="ECO:0000314"/>
    <property type="project" value="BHF-UCL"/>
</dbReference>
<dbReference type="GO" id="GO:1990573">
    <property type="term" value="P:potassium ion import across plasma membrane"/>
    <property type="evidence" value="ECO:0000314"/>
    <property type="project" value="BHF-UCL"/>
</dbReference>
<dbReference type="GO" id="GO:0050821">
    <property type="term" value="P:protein stabilization"/>
    <property type="evidence" value="ECO:0000314"/>
    <property type="project" value="BHF-UCL"/>
</dbReference>
<dbReference type="GO" id="GO:0001895">
    <property type="term" value="P:retina homeostasis"/>
    <property type="evidence" value="ECO:0000250"/>
    <property type="project" value="ARUK-UCL"/>
</dbReference>
<dbReference type="GO" id="GO:0036376">
    <property type="term" value="P:sodium ion export across plasma membrane"/>
    <property type="evidence" value="ECO:0000314"/>
    <property type="project" value="BHF-UCL"/>
</dbReference>
<dbReference type="GO" id="GO:0021678">
    <property type="term" value="P:third ventricle development"/>
    <property type="evidence" value="ECO:0000250"/>
    <property type="project" value="ARUK-UCL"/>
</dbReference>
<dbReference type="GO" id="GO:0150104">
    <property type="term" value="P:transport across blood-brain barrier"/>
    <property type="evidence" value="ECO:0000303"/>
    <property type="project" value="ARUK-UCL"/>
</dbReference>
<dbReference type="FunFam" id="1.20.5.170:FF:000068">
    <property type="entry name" value="Sodium/potassium-transporting ATPase subunit beta"/>
    <property type="match status" value="1"/>
</dbReference>
<dbReference type="FunFam" id="2.60.40.1660:FF:000003">
    <property type="entry name" value="Sodium/potassium-transporting ATPase subunit beta"/>
    <property type="match status" value="1"/>
</dbReference>
<dbReference type="Gene3D" id="1.20.5.170">
    <property type="match status" value="1"/>
</dbReference>
<dbReference type="Gene3D" id="2.60.40.1660">
    <property type="entry name" value="Na, k-atpase alpha subunit"/>
    <property type="match status" value="1"/>
</dbReference>
<dbReference type="InterPro" id="IPR000402">
    <property type="entry name" value="Na/K_ATPase_sub_beta"/>
</dbReference>
<dbReference type="InterPro" id="IPR038702">
    <property type="entry name" value="Na/K_ATPase_sub_beta_sf"/>
</dbReference>
<dbReference type="NCBIfam" id="TIGR01107">
    <property type="entry name" value="Na_K_ATPase_bet"/>
    <property type="match status" value="1"/>
</dbReference>
<dbReference type="PANTHER" id="PTHR11523">
    <property type="entry name" value="SODIUM/POTASSIUM-DEPENDENT ATPASE BETA SUBUNIT"/>
    <property type="match status" value="1"/>
</dbReference>
<dbReference type="PANTHER" id="PTHR11523:SF26">
    <property type="entry name" value="SODIUM_POTASSIUM-TRANSPORTING ATPASE SUBUNIT BETA-2"/>
    <property type="match status" value="1"/>
</dbReference>
<dbReference type="Pfam" id="PF00287">
    <property type="entry name" value="Na_K-ATPase"/>
    <property type="match status" value="1"/>
</dbReference>
<dbReference type="PROSITE" id="PS00390">
    <property type="entry name" value="ATPASE_NA_K_BETA_1"/>
    <property type="match status" value="1"/>
</dbReference>
<dbReference type="PROSITE" id="PS00391">
    <property type="entry name" value="ATPASE_NA_K_BETA_2"/>
    <property type="match status" value="1"/>
</dbReference>
<protein>
    <recommendedName>
        <fullName>Sodium/potassium-transporting ATPase subunit beta-2</fullName>
    </recommendedName>
    <alternativeName>
        <fullName>Adhesion molecule in glia</fullName>
        <shortName>AMOG</shortName>
    </alternativeName>
    <alternativeName>
        <fullName>Sodium/potassium-dependent ATPase subunit beta-2</fullName>
    </alternativeName>
</protein>
<keyword id="KW-0130">Cell adhesion</keyword>
<keyword id="KW-1003">Cell membrane</keyword>
<keyword id="KW-1015">Disulfide bond</keyword>
<keyword id="KW-0325">Glycoprotein</keyword>
<keyword id="KW-0406">Ion transport</keyword>
<keyword id="KW-0472">Membrane</keyword>
<keyword id="KW-0630">Potassium</keyword>
<keyword id="KW-0633">Potassium transport</keyword>
<keyword id="KW-1267">Proteomics identification</keyword>
<keyword id="KW-1185">Reference proteome</keyword>
<keyword id="KW-0735">Signal-anchor</keyword>
<keyword id="KW-0915">Sodium</keyword>
<keyword id="KW-0739">Sodium transport</keyword>
<keyword id="KW-0740">Sodium/potassium transport</keyword>
<keyword id="KW-0812">Transmembrane</keyword>
<keyword id="KW-1133">Transmembrane helix</keyword>
<keyword id="KW-0813">Transport</keyword>